<comment type="catalytic activity">
    <reaction evidence="1">
        <text>(S)-4-amino-5-oxopentanoate = 5-aminolevulinate</text>
        <dbReference type="Rhea" id="RHEA:14265"/>
        <dbReference type="ChEBI" id="CHEBI:57501"/>
        <dbReference type="ChEBI" id="CHEBI:356416"/>
        <dbReference type="EC" id="5.4.3.8"/>
    </reaction>
</comment>
<comment type="cofactor">
    <cofactor evidence="1">
        <name>pyridoxal 5'-phosphate</name>
        <dbReference type="ChEBI" id="CHEBI:597326"/>
    </cofactor>
</comment>
<comment type="pathway">
    <text evidence="1">Porphyrin-containing compound metabolism; protoporphyrin-IX biosynthesis; 5-aminolevulinate from L-glutamyl-tRNA(Glu): step 2/2.</text>
</comment>
<comment type="subunit">
    <text evidence="1">Homodimer.</text>
</comment>
<comment type="subcellular location">
    <subcellularLocation>
        <location evidence="1">Cytoplasm</location>
    </subcellularLocation>
</comment>
<comment type="similarity">
    <text evidence="1">Belongs to the class-III pyridoxal-phosphate-dependent aminotransferase family. HemL subfamily.</text>
</comment>
<dbReference type="EC" id="5.4.3.8" evidence="1"/>
<dbReference type="EMBL" id="FM180568">
    <property type="protein sequence ID" value="CAS07709.1"/>
    <property type="molecule type" value="Genomic_DNA"/>
</dbReference>
<dbReference type="RefSeq" id="WP_000045295.1">
    <property type="nucleotide sequence ID" value="NC_011601.1"/>
</dbReference>
<dbReference type="SMR" id="B7UIK1"/>
<dbReference type="KEGG" id="ecg:E2348C_0161"/>
<dbReference type="HOGENOM" id="CLU_016922_1_5_6"/>
<dbReference type="UniPathway" id="UPA00251">
    <property type="reaction ID" value="UER00317"/>
</dbReference>
<dbReference type="Proteomes" id="UP000008205">
    <property type="component" value="Chromosome"/>
</dbReference>
<dbReference type="GO" id="GO:0005737">
    <property type="term" value="C:cytoplasm"/>
    <property type="evidence" value="ECO:0007669"/>
    <property type="project" value="UniProtKB-SubCell"/>
</dbReference>
<dbReference type="GO" id="GO:0042286">
    <property type="term" value="F:glutamate-1-semialdehyde 2,1-aminomutase activity"/>
    <property type="evidence" value="ECO:0007669"/>
    <property type="project" value="UniProtKB-UniRule"/>
</dbReference>
<dbReference type="GO" id="GO:0030170">
    <property type="term" value="F:pyridoxal phosphate binding"/>
    <property type="evidence" value="ECO:0007669"/>
    <property type="project" value="InterPro"/>
</dbReference>
<dbReference type="GO" id="GO:0008483">
    <property type="term" value="F:transaminase activity"/>
    <property type="evidence" value="ECO:0007669"/>
    <property type="project" value="InterPro"/>
</dbReference>
<dbReference type="GO" id="GO:0006782">
    <property type="term" value="P:protoporphyrinogen IX biosynthetic process"/>
    <property type="evidence" value="ECO:0007669"/>
    <property type="project" value="UniProtKB-UniRule"/>
</dbReference>
<dbReference type="CDD" id="cd00610">
    <property type="entry name" value="OAT_like"/>
    <property type="match status" value="1"/>
</dbReference>
<dbReference type="FunFam" id="3.40.640.10:FF:000021">
    <property type="entry name" value="Glutamate-1-semialdehyde 2,1-aminomutase"/>
    <property type="match status" value="1"/>
</dbReference>
<dbReference type="FunFam" id="3.90.1150.10:FF:000012">
    <property type="entry name" value="Glutamate-1-semialdehyde 2,1-aminomutase"/>
    <property type="match status" value="1"/>
</dbReference>
<dbReference type="Gene3D" id="3.90.1150.10">
    <property type="entry name" value="Aspartate Aminotransferase, domain 1"/>
    <property type="match status" value="1"/>
</dbReference>
<dbReference type="Gene3D" id="3.40.640.10">
    <property type="entry name" value="Type I PLP-dependent aspartate aminotransferase-like (Major domain)"/>
    <property type="match status" value="1"/>
</dbReference>
<dbReference type="HAMAP" id="MF_00375">
    <property type="entry name" value="HemL_aminotrans_3"/>
    <property type="match status" value="1"/>
</dbReference>
<dbReference type="InterPro" id="IPR004639">
    <property type="entry name" value="4pyrrol_synth_GluAld_NH2Trfase"/>
</dbReference>
<dbReference type="InterPro" id="IPR005814">
    <property type="entry name" value="Aminotrans_3"/>
</dbReference>
<dbReference type="InterPro" id="IPR049704">
    <property type="entry name" value="Aminotrans_3_PPA_site"/>
</dbReference>
<dbReference type="InterPro" id="IPR015424">
    <property type="entry name" value="PyrdxlP-dep_Trfase"/>
</dbReference>
<dbReference type="InterPro" id="IPR015421">
    <property type="entry name" value="PyrdxlP-dep_Trfase_major"/>
</dbReference>
<dbReference type="InterPro" id="IPR015422">
    <property type="entry name" value="PyrdxlP-dep_Trfase_small"/>
</dbReference>
<dbReference type="NCBIfam" id="TIGR00713">
    <property type="entry name" value="hemL"/>
    <property type="match status" value="1"/>
</dbReference>
<dbReference type="NCBIfam" id="NF000818">
    <property type="entry name" value="PRK00062.1"/>
    <property type="match status" value="1"/>
</dbReference>
<dbReference type="PANTHER" id="PTHR43713">
    <property type="entry name" value="GLUTAMATE-1-SEMIALDEHYDE 2,1-AMINOMUTASE"/>
    <property type="match status" value="1"/>
</dbReference>
<dbReference type="PANTHER" id="PTHR43713:SF3">
    <property type="entry name" value="GLUTAMATE-1-SEMIALDEHYDE 2,1-AMINOMUTASE 1, CHLOROPLASTIC-RELATED"/>
    <property type="match status" value="1"/>
</dbReference>
<dbReference type="Pfam" id="PF00202">
    <property type="entry name" value="Aminotran_3"/>
    <property type="match status" value="1"/>
</dbReference>
<dbReference type="SUPFAM" id="SSF53383">
    <property type="entry name" value="PLP-dependent transferases"/>
    <property type="match status" value="1"/>
</dbReference>
<dbReference type="PROSITE" id="PS00600">
    <property type="entry name" value="AA_TRANSFER_CLASS_3"/>
    <property type="match status" value="1"/>
</dbReference>
<reference key="1">
    <citation type="journal article" date="2009" name="J. Bacteriol.">
        <title>Complete genome sequence and comparative genome analysis of enteropathogenic Escherichia coli O127:H6 strain E2348/69.</title>
        <authorList>
            <person name="Iguchi A."/>
            <person name="Thomson N.R."/>
            <person name="Ogura Y."/>
            <person name="Saunders D."/>
            <person name="Ooka T."/>
            <person name="Henderson I.R."/>
            <person name="Harris D."/>
            <person name="Asadulghani M."/>
            <person name="Kurokawa K."/>
            <person name="Dean P."/>
            <person name="Kenny B."/>
            <person name="Quail M.A."/>
            <person name="Thurston S."/>
            <person name="Dougan G."/>
            <person name="Hayashi T."/>
            <person name="Parkhill J."/>
            <person name="Frankel G."/>
        </authorList>
    </citation>
    <scope>NUCLEOTIDE SEQUENCE [LARGE SCALE GENOMIC DNA]</scope>
    <source>
        <strain>E2348/69 / EPEC</strain>
    </source>
</reference>
<gene>
    <name evidence="1" type="primary">hemL</name>
    <name type="ordered locus">E2348C_0161</name>
</gene>
<keyword id="KW-0963">Cytoplasm</keyword>
<keyword id="KW-0413">Isomerase</keyword>
<keyword id="KW-0627">Porphyrin biosynthesis</keyword>
<keyword id="KW-0663">Pyridoxal phosphate</keyword>
<keyword id="KW-1185">Reference proteome</keyword>
<protein>
    <recommendedName>
        <fullName evidence="1">Glutamate-1-semialdehyde 2,1-aminomutase</fullName>
        <shortName evidence="1">GSA</shortName>
        <ecNumber evidence="1">5.4.3.8</ecNumber>
    </recommendedName>
    <alternativeName>
        <fullName evidence="1">Glutamate-1-semialdehyde aminotransferase</fullName>
        <shortName evidence="1">GSA-AT</shortName>
    </alternativeName>
</protein>
<proteinExistence type="inferred from homology"/>
<sequence>MSKSENLYSAARELIPGGVNSPVRAFTGVGGTPLFIEKADGAYLYDVDGKAYIDYVGSWGPMVLGHNHPAIRNAVIEAAERGLSFGAPTEMEVKMAQLVTELVPTMDMVRMVNSGTEATMSAIRLARGFTGRDKIIKFEGCYHGHADCLLVKAGSGALTLGQPNSPGVPADFAKHTLTCTYNDLASVRAAFEQYPQEIACIIVEPVAGNMNCVPPLPEFLPGLRALCDEFGALLIIDEVMTGFRVALAGAQDYYGVEPDLTCLGKIIGGGMPVGAFGGRRDVMDALAPTGPVYQAGTLSGNPIAMAAGFACLNEVAQPGVHETLDELTTRLAEGLREAAEEAGIPLVVNHVGGMFGIFFTDAESVTCYQDVMACDVERFKRFFHMMLDEGVYLAPSAFEAGFMSVAHSMEDINNTIDAARRVFAKL</sequence>
<evidence type="ECO:0000255" key="1">
    <source>
        <dbReference type="HAMAP-Rule" id="MF_00375"/>
    </source>
</evidence>
<accession>B7UIK1</accession>
<feature type="chain" id="PRO_1000201019" description="Glutamate-1-semialdehyde 2,1-aminomutase">
    <location>
        <begin position="1"/>
        <end position="426"/>
    </location>
</feature>
<feature type="modified residue" description="N6-(pyridoxal phosphate)lysine" evidence="1">
    <location>
        <position position="265"/>
    </location>
</feature>
<name>GSA_ECO27</name>
<organism>
    <name type="scientific">Escherichia coli O127:H6 (strain E2348/69 / EPEC)</name>
    <dbReference type="NCBI Taxonomy" id="574521"/>
    <lineage>
        <taxon>Bacteria</taxon>
        <taxon>Pseudomonadati</taxon>
        <taxon>Pseudomonadota</taxon>
        <taxon>Gammaproteobacteria</taxon>
        <taxon>Enterobacterales</taxon>
        <taxon>Enterobacteriaceae</taxon>
        <taxon>Escherichia</taxon>
    </lineage>
</organism>